<organism>
    <name type="scientific">Serratia proteamaculans (strain 568)</name>
    <dbReference type="NCBI Taxonomy" id="399741"/>
    <lineage>
        <taxon>Bacteria</taxon>
        <taxon>Pseudomonadati</taxon>
        <taxon>Pseudomonadota</taxon>
        <taxon>Gammaproteobacteria</taxon>
        <taxon>Enterobacterales</taxon>
        <taxon>Yersiniaceae</taxon>
        <taxon>Serratia</taxon>
    </lineage>
</organism>
<protein>
    <recommendedName>
        <fullName evidence="1">Ribosomal RNA small subunit methyltransferase J</fullName>
        <ecNumber evidence="1">2.1.1.242</ecNumber>
    </recommendedName>
    <alternativeName>
        <fullName evidence="1">16S rRNA m2G1516 methyltransferase</fullName>
    </alternativeName>
    <alternativeName>
        <fullName evidence="1">rRNA (guanine-N(2)-)-methyltransferase</fullName>
    </alternativeName>
</protein>
<comment type="function">
    <text evidence="1">Specifically methylates the guanosine in position 1516 of 16S rRNA.</text>
</comment>
<comment type="catalytic activity">
    <reaction evidence="1">
        <text>guanosine(1516) in 16S rRNA + S-adenosyl-L-methionine = N(2)-methylguanosine(1516) in 16S rRNA + S-adenosyl-L-homocysteine + H(+)</text>
        <dbReference type="Rhea" id="RHEA:43220"/>
        <dbReference type="Rhea" id="RHEA-COMP:10412"/>
        <dbReference type="Rhea" id="RHEA-COMP:10413"/>
        <dbReference type="ChEBI" id="CHEBI:15378"/>
        <dbReference type="ChEBI" id="CHEBI:57856"/>
        <dbReference type="ChEBI" id="CHEBI:59789"/>
        <dbReference type="ChEBI" id="CHEBI:74269"/>
        <dbReference type="ChEBI" id="CHEBI:74481"/>
        <dbReference type="EC" id="2.1.1.242"/>
    </reaction>
</comment>
<comment type="subcellular location">
    <subcellularLocation>
        <location evidence="1">Cytoplasm</location>
    </subcellularLocation>
</comment>
<comment type="similarity">
    <text evidence="1">Belongs to the methyltransferase superfamily. RsmJ family.</text>
</comment>
<gene>
    <name evidence="1" type="primary">rsmJ</name>
    <name type="ordered locus">Spro_4700</name>
</gene>
<keyword id="KW-0963">Cytoplasm</keyword>
<keyword id="KW-0489">Methyltransferase</keyword>
<keyword id="KW-0698">rRNA processing</keyword>
<keyword id="KW-0949">S-adenosyl-L-methionine</keyword>
<keyword id="KW-0808">Transferase</keyword>
<feature type="chain" id="PRO_0000318552" description="Ribosomal RNA small subunit methyltransferase J">
    <location>
        <begin position="1"/>
        <end position="248"/>
    </location>
</feature>
<feature type="binding site" evidence="1">
    <location>
        <begin position="101"/>
        <end position="102"/>
    </location>
    <ligand>
        <name>S-adenosyl-L-methionine</name>
        <dbReference type="ChEBI" id="CHEBI:59789"/>
    </ligand>
</feature>
<feature type="binding site" evidence="1">
    <location>
        <begin position="117"/>
        <end position="118"/>
    </location>
    <ligand>
        <name>S-adenosyl-L-methionine</name>
        <dbReference type="ChEBI" id="CHEBI:59789"/>
    </ligand>
</feature>
<feature type="binding site" evidence="1">
    <location>
        <begin position="153"/>
        <end position="154"/>
    </location>
    <ligand>
        <name>S-adenosyl-L-methionine</name>
        <dbReference type="ChEBI" id="CHEBI:59789"/>
    </ligand>
</feature>
<feature type="binding site" evidence="1">
    <location>
        <position position="171"/>
    </location>
    <ligand>
        <name>S-adenosyl-L-methionine</name>
        <dbReference type="ChEBI" id="CHEBI:59789"/>
    </ligand>
</feature>
<sequence length="248" mass="27247">MSVCLLCEEGADPGALSILAQRWQLTSDDEALMALVLTPERLELRKRDEPKLGAIYVDFVSGTMAHRRKFGGGRGEAVAKAVGIKGNYRPDVVDATAGLGRDAFVLASLGCRVRMLERNPVVAALLDDGLQRGYQDAEIGPWLRERMTLLHASSLTALGDIDPRPEVVYLDPMYPHKQKSALVKKEMRVFQSLVGSDDDADGLLEPARRLATKRVVVKRPDYAPPLANVQAHAASTTKSHRFDIYMPV</sequence>
<reference key="1">
    <citation type="submission" date="2007-09" db="EMBL/GenBank/DDBJ databases">
        <title>Complete sequence of chromosome of Serratia proteamaculans 568.</title>
        <authorList>
            <consortium name="US DOE Joint Genome Institute"/>
            <person name="Copeland A."/>
            <person name="Lucas S."/>
            <person name="Lapidus A."/>
            <person name="Barry K."/>
            <person name="Glavina del Rio T."/>
            <person name="Dalin E."/>
            <person name="Tice H."/>
            <person name="Pitluck S."/>
            <person name="Chain P."/>
            <person name="Malfatti S."/>
            <person name="Shin M."/>
            <person name="Vergez L."/>
            <person name="Schmutz J."/>
            <person name="Larimer F."/>
            <person name="Land M."/>
            <person name="Hauser L."/>
            <person name="Kyrpides N."/>
            <person name="Kim E."/>
            <person name="Taghavi S."/>
            <person name="Newman L."/>
            <person name="Vangronsveld J."/>
            <person name="van der Lelie D."/>
            <person name="Richardson P."/>
        </authorList>
    </citation>
    <scope>NUCLEOTIDE SEQUENCE [LARGE SCALE GENOMIC DNA]</scope>
    <source>
        <strain>568</strain>
    </source>
</reference>
<name>RSMJ_SERP5</name>
<accession>A8GL03</accession>
<evidence type="ECO:0000255" key="1">
    <source>
        <dbReference type="HAMAP-Rule" id="MF_01523"/>
    </source>
</evidence>
<dbReference type="EC" id="2.1.1.242" evidence="1"/>
<dbReference type="EMBL" id="CP000826">
    <property type="protein sequence ID" value="ABV43793.1"/>
    <property type="molecule type" value="Genomic_DNA"/>
</dbReference>
<dbReference type="SMR" id="A8GL03"/>
<dbReference type="STRING" id="399741.Spro_4700"/>
<dbReference type="KEGG" id="spe:Spro_4700"/>
<dbReference type="eggNOG" id="COG0742">
    <property type="taxonomic scope" value="Bacteria"/>
</dbReference>
<dbReference type="HOGENOM" id="CLU_076324_0_0_6"/>
<dbReference type="OrthoDB" id="3191794at2"/>
<dbReference type="GO" id="GO:0005737">
    <property type="term" value="C:cytoplasm"/>
    <property type="evidence" value="ECO:0007669"/>
    <property type="project" value="UniProtKB-SubCell"/>
</dbReference>
<dbReference type="GO" id="GO:0008990">
    <property type="term" value="F:rRNA (guanine-N2-)-methyltransferase activity"/>
    <property type="evidence" value="ECO:0007669"/>
    <property type="project" value="UniProtKB-UniRule"/>
</dbReference>
<dbReference type="CDD" id="cd02440">
    <property type="entry name" value="AdoMet_MTases"/>
    <property type="match status" value="1"/>
</dbReference>
<dbReference type="Gene3D" id="3.40.50.150">
    <property type="entry name" value="Vaccinia Virus protein VP39"/>
    <property type="match status" value="1"/>
</dbReference>
<dbReference type="Gene3D" id="3.40.1630.10">
    <property type="entry name" value="YhiQ-like domain"/>
    <property type="match status" value="1"/>
</dbReference>
<dbReference type="HAMAP" id="MF_01523">
    <property type="entry name" value="16SrRNA_methyltr_J"/>
    <property type="match status" value="1"/>
</dbReference>
<dbReference type="InterPro" id="IPR007536">
    <property type="entry name" value="16SrRNA_methylTrfase_J"/>
</dbReference>
<dbReference type="InterPro" id="IPR029063">
    <property type="entry name" value="SAM-dependent_MTases_sf"/>
</dbReference>
<dbReference type="NCBIfam" id="NF008012">
    <property type="entry name" value="PRK10742.1"/>
    <property type="match status" value="1"/>
</dbReference>
<dbReference type="PANTHER" id="PTHR36112">
    <property type="entry name" value="RIBOSOMAL RNA SMALL SUBUNIT METHYLTRANSFERASE J"/>
    <property type="match status" value="1"/>
</dbReference>
<dbReference type="PANTHER" id="PTHR36112:SF1">
    <property type="entry name" value="RIBOSOMAL RNA SMALL SUBUNIT METHYLTRANSFERASE J"/>
    <property type="match status" value="1"/>
</dbReference>
<dbReference type="Pfam" id="PF04445">
    <property type="entry name" value="SAM_MT"/>
    <property type="match status" value="1"/>
</dbReference>
<dbReference type="SUPFAM" id="SSF53335">
    <property type="entry name" value="S-adenosyl-L-methionine-dependent methyltransferases"/>
    <property type="match status" value="1"/>
</dbReference>
<proteinExistence type="inferred from homology"/>